<dbReference type="EMBL" id="AE001273">
    <property type="protein sequence ID" value="AAC67866.1"/>
    <property type="molecule type" value="Genomic_DNA"/>
</dbReference>
<dbReference type="PIR" id="F71534">
    <property type="entry name" value="F71534"/>
</dbReference>
<dbReference type="RefSeq" id="NP_219778.1">
    <property type="nucleotide sequence ID" value="NC_000117.1"/>
</dbReference>
<dbReference type="RefSeq" id="WP_009871620.1">
    <property type="nucleotide sequence ID" value="NC_000117.1"/>
</dbReference>
<dbReference type="STRING" id="272561.CT_273"/>
<dbReference type="EnsemblBacteria" id="AAC67866">
    <property type="protein sequence ID" value="AAC67866"/>
    <property type="gene ID" value="CT_273"/>
</dbReference>
<dbReference type="GeneID" id="884848"/>
<dbReference type="KEGG" id="ctr:CT_273"/>
<dbReference type="PATRIC" id="fig|272561.5.peg.292"/>
<dbReference type="HOGENOM" id="CLU_126988_0_0_0"/>
<dbReference type="InParanoid" id="O84275"/>
<dbReference type="OrthoDB" id="17827at2"/>
<dbReference type="Proteomes" id="UP000000431">
    <property type="component" value="Chromosome"/>
</dbReference>
<dbReference type="InterPro" id="IPR035407">
    <property type="entry name" value="DUF5399"/>
</dbReference>
<dbReference type="Pfam" id="PF17377">
    <property type="entry name" value="DUF5399"/>
    <property type="match status" value="1"/>
</dbReference>
<organism>
    <name type="scientific">Chlamydia trachomatis serovar D (strain ATCC VR-885 / DSM 19411 / UW-3/Cx)</name>
    <dbReference type="NCBI Taxonomy" id="272561"/>
    <lineage>
        <taxon>Bacteria</taxon>
        <taxon>Pseudomonadati</taxon>
        <taxon>Chlamydiota</taxon>
        <taxon>Chlamydiia</taxon>
        <taxon>Chlamydiales</taxon>
        <taxon>Chlamydiaceae</taxon>
        <taxon>Chlamydia/Chlamydophila group</taxon>
        <taxon>Chlamydia</taxon>
    </lineage>
</organism>
<gene>
    <name type="ordered locus">CT_273</name>
</gene>
<feature type="chain" id="PRO_0000218377" description="Uncharacterized protein CT_273">
    <location>
        <begin position="1"/>
        <end position="188"/>
    </location>
</feature>
<feature type="region of interest" description="Disordered" evidence="1">
    <location>
        <begin position="121"/>
        <end position="142"/>
    </location>
</feature>
<feature type="compositionally biased region" description="Basic and acidic residues" evidence="1">
    <location>
        <begin position="130"/>
        <end position="142"/>
    </location>
</feature>
<sequence>MVEIFNYSTSVYEKHSSTNKLVNDFRKEIQMEGAAIRDIAKHAQILDMTPKPSALSTLMQTNKKTCWASFSPPTNFHKQRFSTPYLVPSLGSPDKQDQDMEKISSYLKVLTRGKFSYRSTADTLSRKNKRSSDQKRNGQHFEQEELEVEEEVLVREGTVLLRALDQGIKSSNLLIDYVISRIFQFVQG</sequence>
<name>Y273_CHLTR</name>
<protein>
    <recommendedName>
        <fullName>Uncharacterized protein CT_273</fullName>
    </recommendedName>
</protein>
<evidence type="ECO:0000256" key="1">
    <source>
        <dbReference type="SAM" id="MobiDB-lite"/>
    </source>
</evidence>
<evidence type="ECO:0000305" key="2"/>
<accession>O84275</accession>
<comment type="similarity">
    <text evidence="2">Belongs to the chlamydial CPn_0422/CT_273/TC_0545 family.</text>
</comment>
<proteinExistence type="inferred from homology"/>
<keyword id="KW-1185">Reference proteome</keyword>
<reference key="1">
    <citation type="journal article" date="1998" name="Science">
        <title>Genome sequence of an obligate intracellular pathogen of humans: Chlamydia trachomatis.</title>
        <authorList>
            <person name="Stephens R.S."/>
            <person name="Kalman S."/>
            <person name="Lammel C.J."/>
            <person name="Fan J."/>
            <person name="Marathe R."/>
            <person name="Aravind L."/>
            <person name="Mitchell W.P."/>
            <person name="Olinger L."/>
            <person name="Tatusov R.L."/>
            <person name="Zhao Q."/>
            <person name="Koonin E.V."/>
            <person name="Davis R.W."/>
        </authorList>
    </citation>
    <scope>NUCLEOTIDE SEQUENCE [LARGE SCALE GENOMIC DNA]</scope>
    <source>
        <strain>ATCC VR-885 / DSM 19411 / UW-3/Cx</strain>
    </source>
</reference>